<dbReference type="EMBL" id="EU926080">
    <property type="protein sequence ID" value="ACI41412.1"/>
    <property type="molecule type" value="mRNA"/>
</dbReference>
<dbReference type="EMBL" id="FM864084">
    <property type="protein sequence ID" value="CAS03681.1"/>
    <property type="molecule type" value="mRNA"/>
</dbReference>
<dbReference type="SMR" id="B6DCZ6"/>
<dbReference type="ArachnoServer" id="AS001019">
    <property type="toxin name" value="U8-lycotoxin-Ls1o"/>
</dbReference>
<dbReference type="GO" id="GO:0005576">
    <property type="term" value="C:extracellular region"/>
    <property type="evidence" value="ECO:0007669"/>
    <property type="project" value="UniProtKB-SubCell"/>
</dbReference>
<dbReference type="GO" id="GO:0090729">
    <property type="term" value="F:toxin activity"/>
    <property type="evidence" value="ECO:0007669"/>
    <property type="project" value="UniProtKB-KW"/>
</dbReference>
<dbReference type="InterPro" id="IPR019553">
    <property type="entry name" value="Spider_toxin_CSTX_knottin"/>
</dbReference>
<dbReference type="Pfam" id="PF10530">
    <property type="entry name" value="Toxin_35"/>
    <property type="match status" value="1"/>
</dbReference>
<reference key="1">
    <citation type="journal article" date="2010" name="Zoology">
        <title>Transcriptome analysis of the venom glands of the Chinese wolf spider Lycosa singoriensis.</title>
        <authorList>
            <person name="Zhang Y."/>
            <person name="Chen J."/>
            <person name="Tang X."/>
            <person name="Wang F."/>
            <person name="Jiang L."/>
            <person name="Xiong X."/>
            <person name="Wang M."/>
            <person name="Rong M."/>
            <person name="Liu Z."/>
            <person name="Liang S."/>
        </authorList>
    </citation>
    <scope>NUCLEOTIDE SEQUENCE [LARGE SCALE MRNA]</scope>
    <source>
        <tissue>Venom gland</tissue>
    </source>
</reference>
<feature type="signal peptide" evidence="2">
    <location>
        <begin position="1"/>
        <end position="20"/>
    </location>
</feature>
<feature type="propeptide" id="PRO_0000401811" evidence="1">
    <location>
        <begin position="21"/>
        <end position="26"/>
    </location>
</feature>
<feature type="chain" id="PRO_0000401812" description="U8-lycotoxin-Ls1o">
    <location>
        <begin position="27"/>
        <end position="77"/>
    </location>
</feature>
<comment type="subcellular location">
    <subcellularLocation>
        <location evidence="1">Secreted</location>
    </subcellularLocation>
</comment>
<comment type="tissue specificity">
    <text>Expressed by the venom gland.</text>
</comment>
<comment type="PTM">
    <text evidence="1">Contains 4 disulfide bonds.</text>
</comment>
<comment type="similarity">
    <text evidence="3">Belongs to the neurotoxin 19 (CSTX) family. 08 (U8-Lctx) subfamily.</text>
</comment>
<organism>
    <name type="scientific">Lycosa singoriensis</name>
    <name type="common">Wolf spider</name>
    <name type="synonym">Aranea singoriensis</name>
    <dbReference type="NCBI Taxonomy" id="434756"/>
    <lineage>
        <taxon>Eukaryota</taxon>
        <taxon>Metazoa</taxon>
        <taxon>Ecdysozoa</taxon>
        <taxon>Arthropoda</taxon>
        <taxon>Chelicerata</taxon>
        <taxon>Arachnida</taxon>
        <taxon>Araneae</taxon>
        <taxon>Araneomorphae</taxon>
        <taxon>Entelegynae</taxon>
        <taxon>Lycosoidea</taxon>
        <taxon>Lycosidae</taxon>
        <taxon>Lycosa</taxon>
    </lineage>
</organism>
<evidence type="ECO:0000250" key="1"/>
<evidence type="ECO:0000255" key="2"/>
<evidence type="ECO:0000305" key="3"/>
<proteinExistence type="evidence at transcript level"/>
<protein>
    <recommendedName>
        <fullName>U8-lycotoxin-Ls1o</fullName>
    </recommendedName>
    <alternativeName>
        <fullName>Toxin-like structure LSTX-H25</fullName>
    </alternativeName>
</protein>
<sequence length="77" mass="8525">MKLMIFTGLVLFAIVSLIEAQAENGKPCLPEYKVCTHAPGNCCSDLVCDCYGRYKSGAQIGRNCFCLQKGVIYKREN</sequence>
<keyword id="KW-1015">Disulfide bond</keyword>
<keyword id="KW-0964">Secreted</keyword>
<keyword id="KW-0732">Signal</keyword>
<keyword id="KW-0800">Toxin</keyword>
<name>TX825_LYCSI</name>
<accession>B6DCZ6</accession>